<keyword id="KW-0479">Metal-binding</keyword>
<keyword id="KW-1185">Reference proteome</keyword>
<keyword id="KW-0687">Ribonucleoprotein</keyword>
<keyword id="KW-0689">Ribosomal protein</keyword>
<keyword id="KW-0694">RNA-binding</keyword>
<keyword id="KW-0699">rRNA-binding</keyword>
<keyword id="KW-0862">Zinc</keyword>
<protein>
    <recommendedName>
        <fullName evidence="1">Large ribosomal subunit protein bL31</fullName>
    </recommendedName>
    <alternativeName>
        <fullName evidence="2">50S ribosomal protein L31</fullName>
    </alternativeName>
</protein>
<name>RL31_DICTD</name>
<proteinExistence type="inferred from homology"/>
<evidence type="ECO:0000255" key="1">
    <source>
        <dbReference type="HAMAP-Rule" id="MF_00501"/>
    </source>
</evidence>
<evidence type="ECO:0000305" key="2"/>
<organism>
    <name type="scientific">Dictyoglomus turgidum (strain DSM 6724 / Z-1310)</name>
    <dbReference type="NCBI Taxonomy" id="515635"/>
    <lineage>
        <taxon>Bacteria</taxon>
        <taxon>Pseudomonadati</taxon>
        <taxon>Dictyoglomota</taxon>
        <taxon>Dictyoglomia</taxon>
        <taxon>Dictyoglomales</taxon>
        <taxon>Dictyoglomaceae</taxon>
        <taxon>Dictyoglomus</taxon>
    </lineage>
</organism>
<feature type="chain" id="PRO_1000126610" description="Large ribosomal subunit protein bL31">
    <location>
        <begin position="1"/>
        <end position="68"/>
    </location>
</feature>
<feature type="binding site" evidence="1">
    <location>
        <position position="16"/>
    </location>
    <ligand>
        <name>Zn(2+)</name>
        <dbReference type="ChEBI" id="CHEBI:29105"/>
    </ligand>
</feature>
<feature type="binding site" evidence="1">
    <location>
        <position position="18"/>
    </location>
    <ligand>
        <name>Zn(2+)</name>
        <dbReference type="ChEBI" id="CHEBI:29105"/>
    </ligand>
</feature>
<feature type="binding site" evidence="1">
    <location>
        <position position="36"/>
    </location>
    <ligand>
        <name>Zn(2+)</name>
        <dbReference type="ChEBI" id="CHEBI:29105"/>
    </ligand>
</feature>
<feature type="binding site" evidence="1">
    <location>
        <position position="39"/>
    </location>
    <ligand>
        <name>Zn(2+)</name>
        <dbReference type="ChEBI" id="CHEBI:29105"/>
    </ligand>
</feature>
<comment type="function">
    <text evidence="1">Binds the 23S rRNA.</text>
</comment>
<comment type="cofactor">
    <cofactor evidence="1">
        <name>Zn(2+)</name>
        <dbReference type="ChEBI" id="CHEBI:29105"/>
    </cofactor>
    <text evidence="1">Binds 1 zinc ion per subunit.</text>
</comment>
<comment type="subunit">
    <text evidence="1">Part of the 50S ribosomal subunit.</text>
</comment>
<comment type="similarity">
    <text evidence="1">Belongs to the bacterial ribosomal protein bL31 family. Type A subfamily.</text>
</comment>
<dbReference type="EMBL" id="CP001251">
    <property type="protein sequence ID" value="ACK42082.1"/>
    <property type="molecule type" value="Genomic_DNA"/>
</dbReference>
<dbReference type="RefSeq" id="WP_012583166.1">
    <property type="nucleotide sequence ID" value="NC_011661.1"/>
</dbReference>
<dbReference type="RefSeq" id="YP_002352696.1">
    <property type="nucleotide sequence ID" value="NC_011661.1"/>
</dbReference>
<dbReference type="SMR" id="B8DZZ9"/>
<dbReference type="FunCoup" id="B8DZZ9">
    <property type="interactions" value="260"/>
</dbReference>
<dbReference type="STRING" id="515635.Dtur_0801"/>
<dbReference type="EnsemblBacteria" id="ACK42082">
    <property type="protein sequence ID" value="ACK42082"/>
    <property type="gene ID" value="Dtur_0801"/>
</dbReference>
<dbReference type="KEGG" id="dtu:Dtur_0801"/>
<dbReference type="PATRIC" id="fig|515635.4.peg.839"/>
<dbReference type="eggNOG" id="COG0254">
    <property type="taxonomic scope" value="Bacteria"/>
</dbReference>
<dbReference type="HOGENOM" id="CLU_114306_4_3_0"/>
<dbReference type="InParanoid" id="B8DZZ9"/>
<dbReference type="OrthoDB" id="9803251at2"/>
<dbReference type="Proteomes" id="UP000007719">
    <property type="component" value="Chromosome"/>
</dbReference>
<dbReference type="GO" id="GO:1990904">
    <property type="term" value="C:ribonucleoprotein complex"/>
    <property type="evidence" value="ECO:0007669"/>
    <property type="project" value="UniProtKB-KW"/>
</dbReference>
<dbReference type="GO" id="GO:0005840">
    <property type="term" value="C:ribosome"/>
    <property type="evidence" value="ECO:0007669"/>
    <property type="project" value="UniProtKB-KW"/>
</dbReference>
<dbReference type="GO" id="GO:0046872">
    <property type="term" value="F:metal ion binding"/>
    <property type="evidence" value="ECO:0007669"/>
    <property type="project" value="UniProtKB-KW"/>
</dbReference>
<dbReference type="GO" id="GO:0019843">
    <property type="term" value="F:rRNA binding"/>
    <property type="evidence" value="ECO:0007669"/>
    <property type="project" value="UniProtKB-KW"/>
</dbReference>
<dbReference type="GO" id="GO:0003735">
    <property type="term" value="F:structural constituent of ribosome"/>
    <property type="evidence" value="ECO:0007669"/>
    <property type="project" value="InterPro"/>
</dbReference>
<dbReference type="GO" id="GO:0006412">
    <property type="term" value="P:translation"/>
    <property type="evidence" value="ECO:0007669"/>
    <property type="project" value="UniProtKB-UniRule"/>
</dbReference>
<dbReference type="Gene3D" id="4.10.830.30">
    <property type="entry name" value="Ribosomal protein L31"/>
    <property type="match status" value="1"/>
</dbReference>
<dbReference type="HAMAP" id="MF_00501">
    <property type="entry name" value="Ribosomal_bL31_1"/>
    <property type="match status" value="1"/>
</dbReference>
<dbReference type="InterPro" id="IPR034704">
    <property type="entry name" value="Ribosomal_bL28/bL31-like_sf"/>
</dbReference>
<dbReference type="InterPro" id="IPR002150">
    <property type="entry name" value="Ribosomal_bL31"/>
</dbReference>
<dbReference type="InterPro" id="IPR027491">
    <property type="entry name" value="Ribosomal_bL31_A"/>
</dbReference>
<dbReference type="InterPro" id="IPR042105">
    <property type="entry name" value="Ribosomal_bL31_sf"/>
</dbReference>
<dbReference type="NCBIfam" id="TIGR00105">
    <property type="entry name" value="L31"/>
    <property type="match status" value="1"/>
</dbReference>
<dbReference type="NCBIfam" id="NF000612">
    <property type="entry name" value="PRK00019.1"/>
    <property type="match status" value="1"/>
</dbReference>
<dbReference type="NCBIfam" id="NF001809">
    <property type="entry name" value="PRK00528.1"/>
    <property type="match status" value="1"/>
</dbReference>
<dbReference type="PANTHER" id="PTHR33280">
    <property type="entry name" value="50S RIBOSOMAL PROTEIN L31, CHLOROPLASTIC"/>
    <property type="match status" value="1"/>
</dbReference>
<dbReference type="PANTHER" id="PTHR33280:SF1">
    <property type="entry name" value="LARGE RIBOSOMAL SUBUNIT PROTEIN BL31C"/>
    <property type="match status" value="1"/>
</dbReference>
<dbReference type="Pfam" id="PF01197">
    <property type="entry name" value="Ribosomal_L31"/>
    <property type="match status" value="1"/>
</dbReference>
<dbReference type="PRINTS" id="PR01249">
    <property type="entry name" value="RIBOSOMALL31"/>
</dbReference>
<dbReference type="SUPFAM" id="SSF143800">
    <property type="entry name" value="L28p-like"/>
    <property type="match status" value="1"/>
</dbReference>
<dbReference type="PROSITE" id="PS01143">
    <property type="entry name" value="RIBOSOMAL_L31"/>
    <property type="match status" value="1"/>
</dbReference>
<gene>
    <name evidence="1" type="primary">rpmE</name>
    <name type="ordered locus">Dtur_0801</name>
</gene>
<reference key="1">
    <citation type="journal article" date="2016" name="Front. Microbiol.">
        <title>The complete genome sequence of hyperthermophile Dictyoglomus turgidum DSM 6724 reveals a specialized carbohydrate fermentor.</title>
        <authorList>
            <person name="Brumm P.J."/>
            <person name="Gowda K."/>
            <person name="Robb F.T."/>
            <person name="Mead D.A."/>
        </authorList>
    </citation>
    <scope>NUCLEOTIDE SEQUENCE [LARGE SCALE GENOMIC DNA]</scope>
    <source>
        <strain>DSM 6724 / Z-1310</strain>
    </source>
</reference>
<accession>B8DZZ9</accession>
<sequence>MKKGIHPELKKAKIVCACGAVYETLSTKEYMTVEICSKCHPFFTGQRKFVDTEGRVERFTKKYNWEIK</sequence>